<sequence>MEKLYVEGNKILNGHVIISGSKNAALPILFMTILTEGKIKIGNIPNLTDINIALKLLVYLGVKITGNETLCIDASSINIFCPPYNLINKIRASIWILGPLLARFGKAKIFLPGGCKIGSRPIDLHLNGLTQLGATINLKNNCIDAYVKGRLQGKYILMEKISVGATITIMSAATLAKGSTIIDNAACEPEIVDIAKFLNTLGADIIGAGSNKICIKGVLKLTGGTHQVIPDRIETGTFLVAAAASQGHITCHKTEPKHLTNVLMKLTEAGAKIKTGKDWIKLDMRGKRPKSLNICTAPYPGFPTDMQAQFALLNSISKGIGTITETIFENRFIYTSELIRMGAKIKIKNNTIICCGIPKLISSNVFSSDLRASATLILAGCIAAGITIVNHTYHLVRGYESFPKKLNKIGANIKII</sequence>
<protein>
    <recommendedName>
        <fullName evidence="1">UDP-N-acetylglucosamine 1-carboxyvinyltransferase</fullName>
        <ecNumber evidence="1">2.5.1.7</ecNumber>
    </recommendedName>
    <alternativeName>
        <fullName evidence="1">Enoylpyruvate transferase</fullName>
    </alternativeName>
    <alternativeName>
        <fullName evidence="1">UDP-N-acetylglucosamine enolpyruvyl transferase</fullName>
        <shortName evidence="1">EPT</shortName>
    </alternativeName>
</protein>
<dbReference type="EC" id="2.5.1.7" evidence="1"/>
<dbReference type="EMBL" id="CP001158">
    <property type="protein sequence ID" value="ACL30186.1"/>
    <property type="molecule type" value="Genomic_DNA"/>
</dbReference>
<dbReference type="RefSeq" id="WP_012619530.1">
    <property type="nucleotide sequence ID" value="NC_011834.1"/>
</dbReference>
<dbReference type="SMR" id="B8D7S1"/>
<dbReference type="KEGG" id="bau:BUAPTUC7_380"/>
<dbReference type="HOGENOM" id="CLU_027387_0_0_6"/>
<dbReference type="UniPathway" id="UPA00219"/>
<dbReference type="GO" id="GO:0005737">
    <property type="term" value="C:cytoplasm"/>
    <property type="evidence" value="ECO:0007669"/>
    <property type="project" value="UniProtKB-SubCell"/>
</dbReference>
<dbReference type="GO" id="GO:0008760">
    <property type="term" value="F:UDP-N-acetylglucosamine 1-carboxyvinyltransferase activity"/>
    <property type="evidence" value="ECO:0007669"/>
    <property type="project" value="UniProtKB-UniRule"/>
</dbReference>
<dbReference type="GO" id="GO:0051301">
    <property type="term" value="P:cell division"/>
    <property type="evidence" value="ECO:0007669"/>
    <property type="project" value="UniProtKB-KW"/>
</dbReference>
<dbReference type="GO" id="GO:0071555">
    <property type="term" value="P:cell wall organization"/>
    <property type="evidence" value="ECO:0007669"/>
    <property type="project" value="UniProtKB-KW"/>
</dbReference>
<dbReference type="GO" id="GO:0009252">
    <property type="term" value="P:peptidoglycan biosynthetic process"/>
    <property type="evidence" value="ECO:0007669"/>
    <property type="project" value="UniProtKB-UniRule"/>
</dbReference>
<dbReference type="GO" id="GO:0008360">
    <property type="term" value="P:regulation of cell shape"/>
    <property type="evidence" value="ECO:0007669"/>
    <property type="project" value="UniProtKB-KW"/>
</dbReference>
<dbReference type="GO" id="GO:0019277">
    <property type="term" value="P:UDP-N-acetylgalactosamine biosynthetic process"/>
    <property type="evidence" value="ECO:0007669"/>
    <property type="project" value="InterPro"/>
</dbReference>
<dbReference type="CDD" id="cd01555">
    <property type="entry name" value="UdpNAET"/>
    <property type="match status" value="1"/>
</dbReference>
<dbReference type="FunFam" id="3.65.10.10:FF:000001">
    <property type="entry name" value="UDP-N-acetylglucosamine 1-carboxyvinyltransferase"/>
    <property type="match status" value="1"/>
</dbReference>
<dbReference type="Gene3D" id="3.65.10.10">
    <property type="entry name" value="Enolpyruvate transferase domain"/>
    <property type="match status" value="2"/>
</dbReference>
<dbReference type="HAMAP" id="MF_00111">
    <property type="entry name" value="MurA"/>
    <property type="match status" value="1"/>
</dbReference>
<dbReference type="InterPro" id="IPR001986">
    <property type="entry name" value="Enolpyruvate_Tfrase_dom"/>
</dbReference>
<dbReference type="InterPro" id="IPR036968">
    <property type="entry name" value="Enolpyruvate_Tfrase_sf"/>
</dbReference>
<dbReference type="InterPro" id="IPR050068">
    <property type="entry name" value="MurA_subfamily"/>
</dbReference>
<dbReference type="InterPro" id="IPR013792">
    <property type="entry name" value="RNA3'P_cycl/enolpyr_Trfase_a/b"/>
</dbReference>
<dbReference type="InterPro" id="IPR005750">
    <property type="entry name" value="UDP_GlcNAc_COvinyl_MurA"/>
</dbReference>
<dbReference type="NCBIfam" id="TIGR01072">
    <property type="entry name" value="murA"/>
    <property type="match status" value="1"/>
</dbReference>
<dbReference type="NCBIfam" id="NF006873">
    <property type="entry name" value="PRK09369.1"/>
    <property type="match status" value="1"/>
</dbReference>
<dbReference type="PANTHER" id="PTHR43783">
    <property type="entry name" value="UDP-N-ACETYLGLUCOSAMINE 1-CARBOXYVINYLTRANSFERASE"/>
    <property type="match status" value="1"/>
</dbReference>
<dbReference type="PANTHER" id="PTHR43783:SF1">
    <property type="entry name" value="UDP-N-ACETYLGLUCOSAMINE 1-CARBOXYVINYLTRANSFERASE"/>
    <property type="match status" value="1"/>
</dbReference>
<dbReference type="Pfam" id="PF00275">
    <property type="entry name" value="EPSP_synthase"/>
    <property type="match status" value="1"/>
</dbReference>
<dbReference type="SUPFAM" id="SSF55205">
    <property type="entry name" value="EPT/RTPC-like"/>
    <property type="match status" value="1"/>
</dbReference>
<organism>
    <name type="scientific">Buchnera aphidicola subsp. Acyrthosiphon pisum (strain Tuc7)</name>
    <dbReference type="NCBI Taxonomy" id="561501"/>
    <lineage>
        <taxon>Bacteria</taxon>
        <taxon>Pseudomonadati</taxon>
        <taxon>Pseudomonadota</taxon>
        <taxon>Gammaproteobacteria</taxon>
        <taxon>Enterobacterales</taxon>
        <taxon>Erwiniaceae</taxon>
        <taxon>Buchnera</taxon>
    </lineage>
</organism>
<comment type="function">
    <text evidence="1">Cell wall formation. Adds enolpyruvyl to UDP-N-acetylglucosamine.</text>
</comment>
<comment type="catalytic activity">
    <reaction evidence="1">
        <text>phosphoenolpyruvate + UDP-N-acetyl-alpha-D-glucosamine = UDP-N-acetyl-3-O-(1-carboxyvinyl)-alpha-D-glucosamine + phosphate</text>
        <dbReference type="Rhea" id="RHEA:18681"/>
        <dbReference type="ChEBI" id="CHEBI:43474"/>
        <dbReference type="ChEBI" id="CHEBI:57705"/>
        <dbReference type="ChEBI" id="CHEBI:58702"/>
        <dbReference type="ChEBI" id="CHEBI:68483"/>
        <dbReference type="EC" id="2.5.1.7"/>
    </reaction>
</comment>
<comment type="pathway">
    <text evidence="1">Cell wall biogenesis; peptidoglycan biosynthesis.</text>
</comment>
<comment type="subcellular location">
    <subcellularLocation>
        <location evidence="1">Cytoplasm</location>
    </subcellularLocation>
</comment>
<comment type="similarity">
    <text evidence="1">Belongs to the EPSP synthase family. MurA subfamily.</text>
</comment>
<proteinExistence type="inferred from homology"/>
<name>MURA_BUCAT</name>
<gene>
    <name evidence="1" type="primary">murA</name>
    <name type="ordered locus">BUAPTUC7_380</name>
</gene>
<evidence type="ECO:0000255" key="1">
    <source>
        <dbReference type="HAMAP-Rule" id="MF_00111"/>
    </source>
</evidence>
<keyword id="KW-0131">Cell cycle</keyword>
<keyword id="KW-0132">Cell division</keyword>
<keyword id="KW-0133">Cell shape</keyword>
<keyword id="KW-0961">Cell wall biogenesis/degradation</keyword>
<keyword id="KW-0963">Cytoplasm</keyword>
<keyword id="KW-0573">Peptidoglycan synthesis</keyword>
<keyword id="KW-0670">Pyruvate</keyword>
<keyword id="KW-0808">Transferase</keyword>
<reference key="1">
    <citation type="journal article" date="2009" name="Science">
        <title>The dynamics and time scale of ongoing genomic erosion in symbiotic bacteria.</title>
        <authorList>
            <person name="Moran N.A."/>
            <person name="McLaughlin H.J."/>
            <person name="Sorek R."/>
        </authorList>
    </citation>
    <scope>NUCLEOTIDE SEQUENCE [LARGE SCALE GENOMIC DNA]</scope>
    <source>
        <strain>Tuc7</strain>
    </source>
</reference>
<accession>B8D7S1</accession>
<feature type="chain" id="PRO_1000192077" description="UDP-N-acetylglucosamine 1-carboxyvinyltransferase">
    <location>
        <begin position="1"/>
        <end position="416"/>
    </location>
</feature>
<feature type="active site" description="Proton donor" evidence="1">
    <location>
        <position position="115"/>
    </location>
</feature>
<feature type="binding site" evidence="1">
    <location>
        <begin position="22"/>
        <end position="23"/>
    </location>
    <ligand>
        <name>phosphoenolpyruvate</name>
        <dbReference type="ChEBI" id="CHEBI:58702"/>
    </ligand>
</feature>
<feature type="binding site" evidence="1">
    <location>
        <position position="91"/>
    </location>
    <ligand>
        <name>UDP-N-acetyl-alpha-D-glucosamine</name>
        <dbReference type="ChEBI" id="CHEBI:57705"/>
    </ligand>
</feature>
<feature type="binding site" evidence="1">
    <location>
        <begin position="120"/>
        <end position="124"/>
    </location>
    <ligand>
        <name>UDP-N-acetyl-alpha-D-glucosamine</name>
        <dbReference type="ChEBI" id="CHEBI:57705"/>
    </ligand>
</feature>
<feature type="binding site" evidence="1">
    <location>
        <position position="305"/>
    </location>
    <ligand>
        <name>UDP-N-acetyl-alpha-D-glucosamine</name>
        <dbReference type="ChEBI" id="CHEBI:57705"/>
    </ligand>
</feature>
<feature type="binding site" evidence="1">
    <location>
        <position position="327"/>
    </location>
    <ligand>
        <name>UDP-N-acetyl-alpha-D-glucosamine</name>
        <dbReference type="ChEBI" id="CHEBI:57705"/>
    </ligand>
</feature>
<feature type="modified residue" description="2-(S-cysteinyl)pyruvic acid O-phosphothioketal" evidence="1">
    <location>
        <position position="115"/>
    </location>
</feature>